<reference key="1">
    <citation type="journal article" date="2000" name="Nature">
        <title>Sequence and analysis of chromosome 1 of the plant Arabidopsis thaliana.</title>
        <authorList>
            <person name="Theologis A."/>
            <person name="Ecker J.R."/>
            <person name="Palm C.J."/>
            <person name="Federspiel N.A."/>
            <person name="Kaul S."/>
            <person name="White O."/>
            <person name="Alonso J."/>
            <person name="Altafi H."/>
            <person name="Araujo R."/>
            <person name="Bowman C.L."/>
            <person name="Brooks S.Y."/>
            <person name="Buehler E."/>
            <person name="Chan A."/>
            <person name="Chao Q."/>
            <person name="Chen H."/>
            <person name="Cheuk R.F."/>
            <person name="Chin C.W."/>
            <person name="Chung M.K."/>
            <person name="Conn L."/>
            <person name="Conway A.B."/>
            <person name="Conway A.R."/>
            <person name="Creasy T.H."/>
            <person name="Dewar K."/>
            <person name="Dunn P."/>
            <person name="Etgu P."/>
            <person name="Feldblyum T.V."/>
            <person name="Feng J.-D."/>
            <person name="Fong B."/>
            <person name="Fujii C.Y."/>
            <person name="Gill J.E."/>
            <person name="Goldsmith A.D."/>
            <person name="Haas B."/>
            <person name="Hansen N.F."/>
            <person name="Hughes B."/>
            <person name="Huizar L."/>
            <person name="Hunter J.L."/>
            <person name="Jenkins J."/>
            <person name="Johnson-Hopson C."/>
            <person name="Khan S."/>
            <person name="Khaykin E."/>
            <person name="Kim C.J."/>
            <person name="Koo H.L."/>
            <person name="Kremenetskaia I."/>
            <person name="Kurtz D.B."/>
            <person name="Kwan A."/>
            <person name="Lam B."/>
            <person name="Langin-Hooper S."/>
            <person name="Lee A."/>
            <person name="Lee J.M."/>
            <person name="Lenz C.A."/>
            <person name="Li J.H."/>
            <person name="Li Y.-P."/>
            <person name="Lin X."/>
            <person name="Liu S.X."/>
            <person name="Liu Z.A."/>
            <person name="Luros J.S."/>
            <person name="Maiti R."/>
            <person name="Marziali A."/>
            <person name="Militscher J."/>
            <person name="Miranda M."/>
            <person name="Nguyen M."/>
            <person name="Nierman W.C."/>
            <person name="Osborne B.I."/>
            <person name="Pai G."/>
            <person name="Peterson J."/>
            <person name="Pham P.K."/>
            <person name="Rizzo M."/>
            <person name="Rooney T."/>
            <person name="Rowley D."/>
            <person name="Sakano H."/>
            <person name="Salzberg S.L."/>
            <person name="Schwartz J.R."/>
            <person name="Shinn P."/>
            <person name="Southwick A.M."/>
            <person name="Sun H."/>
            <person name="Tallon L.J."/>
            <person name="Tambunga G."/>
            <person name="Toriumi M.J."/>
            <person name="Town C.D."/>
            <person name="Utterback T."/>
            <person name="Van Aken S."/>
            <person name="Vaysberg M."/>
            <person name="Vysotskaia V.S."/>
            <person name="Walker M."/>
            <person name="Wu D."/>
            <person name="Yu G."/>
            <person name="Fraser C.M."/>
            <person name="Venter J.C."/>
            <person name="Davis R.W."/>
        </authorList>
    </citation>
    <scope>NUCLEOTIDE SEQUENCE [LARGE SCALE GENOMIC DNA]</scope>
    <source>
        <strain>cv. Columbia</strain>
    </source>
</reference>
<reference key="2">
    <citation type="journal article" date="2017" name="Plant J.">
        <title>Araport11: a complete reannotation of the Arabidopsis thaliana reference genome.</title>
        <authorList>
            <person name="Cheng C.Y."/>
            <person name="Krishnakumar V."/>
            <person name="Chan A.P."/>
            <person name="Thibaud-Nissen F."/>
            <person name="Schobel S."/>
            <person name="Town C.D."/>
        </authorList>
    </citation>
    <scope>GENOME REANNOTATION</scope>
    <source>
        <strain>cv. Columbia</strain>
    </source>
</reference>
<reference key="3">
    <citation type="journal article" date="2002" name="Science">
        <title>Functional annotation of a full-length Arabidopsis cDNA collection.</title>
        <authorList>
            <person name="Seki M."/>
            <person name="Narusaka M."/>
            <person name="Kamiya A."/>
            <person name="Ishida J."/>
            <person name="Satou M."/>
            <person name="Sakurai T."/>
            <person name="Nakajima M."/>
            <person name="Enju A."/>
            <person name="Akiyama K."/>
            <person name="Oono Y."/>
            <person name="Muramatsu M."/>
            <person name="Hayashizaki Y."/>
            <person name="Kawai J."/>
            <person name="Carninci P."/>
            <person name="Itoh M."/>
            <person name="Ishii Y."/>
            <person name="Arakawa T."/>
            <person name="Shibata K."/>
            <person name="Shinagawa A."/>
            <person name="Shinozaki K."/>
        </authorList>
    </citation>
    <scope>NUCLEOTIDE SEQUENCE [LARGE SCALE MRNA] (ISOFORM 2)</scope>
    <source>
        <strain>cv. Columbia</strain>
    </source>
</reference>
<reference key="4">
    <citation type="journal article" date="2003" name="Science">
        <title>Empirical analysis of transcriptional activity in the Arabidopsis genome.</title>
        <authorList>
            <person name="Yamada K."/>
            <person name="Lim J."/>
            <person name="Dale J.M."/>
            <person name="Chen H."/>
            <person name="Shinn P."/>
            <person name="Palm C.J."/>
            <person name="Southwick A.M."/>
            <person name="Wu H.C."/>
            <person name="Kim C.J."/>
            <person name="Nguyen M."/>
            <person name="Pham P.K."/>
            <person name="Cheuk R.F."/>
            <person name="Karlin-Newmann G."/>
            <person name="Liu S.X."/>
            <person name="Lam B."/>
            <person name="Sakano H."/>
            <person name="Wu T."/>
            <person name="Yu G."/>
            <person name="Miranda M."/>
            <person name="Quach H.L."/>
            <person name="Tripp M."/>
            <person name="Chang C.H."/>
            <person name="Lee J.M."/>
            <person name="Toriumi M.J."/>
            <person name="Chan M.M."/>
            <person name="Tang C.C."/>
            <person name="Onodera C.S."/>
            <person name="Deng J.M."/>
            <person name="Akiyama K."/>
            <person name="Ansari Y."/>
            <person name="Arakawa T."/>
            <person name="Banh J."/>
            <person name="Banno F."/>
            <person name="Bowser L."/>
            <person name="Brooks S.Y."/>
            <person name="Carninci P."/>
            <person name="Chao Q."/>
            <person name="Choy N."/>
            <person name="Enju A."/>
            <person name="Goldsmith A.D."/>
            <person name="Gurjal M."/>
            <person name="Hansen N.F."/>
            <person name="Hayashizaki Y."/>
            <person name="Johnson-Hopson C."/>
            <person name="Hsuan V.W."/>
            <person name="Iida K."/>
            <person name="Karnes M."/>
            <person name="Khan S."/>
            <person name="Koesema E."/>
            <person name="Ishida J."/>
            <person name="Jiang P.X."/>
            <person name="Jones T."/>
            <person name="Kawai J."/>
            <person name="Kamiya A."/>
            <person name="Meyers C."/>
            <person name="Nakajima M."/>
            <person name="Narusaka M."/>
            <person name="Seki M."/>
            <person name="Sakurai T."/>
            <person name="Satou M."/>
            <person name="Tamse R."/>
            <person name="Vaysberg M."/>
            <person name="Wallender E.K."/>
            <person name="Wong C."/>
            <person name="Yamamura Y."/>
            <person name="Yuan S."/>
            <person name="Shinozaki K."/>
            <person name="Davis R.W."/>
            <person name="Theologis A."/>
            <person name="Ecker J.R."/>
        </authorList>
    </citation>
    <scope>NUCLEOTIDE SEQUENCE [LARGE SCALE MRNA] (ISOFORM 1)</scope>
    <source>
        <strain>cv. Columbia</strain>
    </source>
</reference>
<reference key="5">
    <citation type="journal article" date="2004" name="Genome Res.">
        <title>Whole genome sequence comparisons and 'full-length' cDNA sequences: a combined approach to evaluate and improve Arabidopsis genome annotation.</title>
        <authorList>
            <person name="Castelli V."/>
            <person name="Aury J.-M."/>
            <person name="Jaillon O."/>
            <person name="Wincker P."/>
            <person name="Clepet C."/>
            <person name="Menard M."/>
            <person name="Cruaud C."/>
            <person name="Quetier F."/>
            <person name="Scarpelli C."/>
            <person name="Schaechter V."/>
            <person name="Temple G."/>
            <person name="Caboche M."/>
            <person name="Weissenbach J."/>
            <person name="Salanoubat M."/>
        </authorList>
    </citation>
    <scope>NUCLEOTIDE SEQUENCE [LARGE SCALE MRNA] (ISOFORM 3)</scope>
    <source>
        <strain>cv. Columbia</strain>
    </source>
</reference>
<reference key="6">
    <citation type="journal article" date="2007" name="FEBS Lett.">
        <title>Nitrate transporters and peptide transporters.</title>
        <authorList>
            <person name="Tsay Y.F."/>
            <person name="Chiu C.C."/>
            <person name="Tsai C.B."/>
            <person name="Ho C.H."/>
            <person name="Hsu P.K."/>
        </authorList>
    </citation>
    <scope>TISSUE SPECIFICITY</scope>
    <scope>GENE FAMILY</scope>
</reference>
<reference key="7">
    <citation type="journal article" date="2010" name="Plant Cell">
        <title>The Arabidopsis nitrate transporter NRT1.8 functions in nitrate removal from the xylem sap and mediates cadmium tolerance.</title>
        <authorList>
            <person name="Li J.Y."/>
            <person name="Fu Y.L."/>
            <person name="Pike S.M."/>
            <person name="Bao J."/>
            <person name="Tian W."/>
            <person name="Zhang Y."/>
            <person name="Chen C.Z."/>
            <person name="Zhang Y."/>
            <person name="Li H.M."/>
            <person name="Huang J."/>
            <person name="Li L.G."/>
            <person name="Schroeder J.I."/>
            <person name="Gassmann W."/>
            <person name="Gong J.M."/>
        </authorList>
    </citation>
    <scope>GENE FAMILY</scope>
</reference>
<reference key="8">
    <citation type="journal article" date="2014" name="Trends Plant Sci.">
        <title>A unified nomenclature of NITRATE TRANSPORTER 1/PEPTIDE TRANSPORTER family members in plants.</title>
        <authorList>
            <person name="Leran S."/>
            <person name="Varala K."/>
            <person name="Boyer J.C."/>
            <person name="Chiurazzi M."/>
            <person name="Crawford N."/>
            <person name="Daniel-Vedele F."/>
            <person name="David L."/>
            <person name="Dickstein R."/>
            <person name="Fernandez E."/>
            <person name="Forde B."/>
            <person name="Gassmann W."/>
            <person name="Geiger D."/>
            <person name="Gojon A."/>
            <person name="Gong J.M."/>
            <person name="Halkier B.A."/>
            <person name="Harris J.M."/>
            <person name="Hedrich R."/>
            <person name="Limami A.M."/>
            <person name="Rentsch D."/>
            <person name="Seo M."/>
            <person name="Tsay Y.F."/>
            <person name="Zhang M."/>
            <person name="Coruzzi G."/>
            <person name="Lacombe B."/>
        </authorList>
    </citation>
    <scope>GENE FAMILY</scope>
    <scope>NOMENCLATURE</scope>
</reference>
<comment type="subcellular location">
    <subcellularLocation>
        <location evidence="1">Membrane</location>
        <topology evidence="1">Multi-pass membrane protein</topology>
    </subcellularLocation>
</comment>
<comment type="alternative products">
    <event type="alternative splicing"/>
    <isoform>
        <id>Q8RX67-1</id>
        <name>1</name>
        <sequence type="displayed"/>
    </isoform>
    <isoform>
        <id>Q8RX67-2</id>
        <name>2</name>
        <sequence type="described" ref="VSP_039949"/>
    </isoform>
    <isoform>
        <id>Q8RX67-3</id>
        <name>3</name>
        <sequence type="described" ref="VSP_039948"/>
    </isoform>
</comment>
<comment type="tissue specificity">
    <text evidence="4">Expressed in shoots and roots.</text>
</comment>
<comment type="similarity">
    <text evidence="7">Belongs to the major facilitator superfamily. Proton-dependent oligopeptide transporter (POT/PTR) (TC 2.A.17) family.</text>
</comment>
<comment type="sequence caution" evidence="7">
    <conflict type="erroneous gene model prediction">
        <sequence resource="EMBL-CDS" id="AAG51131"/>
    </conflict>
</comment>
<comment type="sequence caution" evidence="7">
    <conflict type="erroneous gene model prediction">
        <sequence resource="EMBL-CDS" id="AAG51788"/>
    </conflict>
</comment>
<feature type="chain" id="PRO_0000399958" description="Protein NRT1/ PTR FAMILY 5.11">
    <location>
        <begin position="1"/>
        <end position="538"/>
    </location>
</feature>
<feature type="transmembrane region" description="Helical" evidence="3">
    <location>
        <begin position="44"/>
        <end position="64"/>
    </location>
</feature>
<feature type="transmembrane region" description="Helical" evidence="3">
    <location>
        <begin position="74"/>
        <end position="94"/>
    </location>
</feature>
<feature type="transmembrane region" description="Helical" evidence="3">
    <location>
        <begin position="100"/>
        <end position="120"/>
    </location>
</feature>
<feature type="transmembrane region" description="Helical" evidence="3">
    <location>
        <begin position="134"/>
        <end position="154"/>
    </location>
</feature>
<feature type="transmembrane region" description="Helical" evidence="3">
    <location>
        <begin position="175"/>
        <end position="194"/>
    </location>
</feature>
<feature type="transmembrane region" description="Helical" evidence="3">
    <location>
        <begin position="204"/>
        <end position="224"/>
    </location>
</feature>
<feature type="transmembrane region" description="Helical" evidence="3">
    <location>
        <begin position="308"/>
        <end position="328"/>
    </location>
</feature>
<feature type="transmembrane region" description="Helical" evidence="3">
    <location>
        <begin position="342"/>
        <end position="362"/>
    </location>
</feature>
<feature type="transmembrane region" description="Helical" evidence="3">
    <location>
        <begin position="389"/>
        <end position="409"/>
    </location>
</feature>
<feature type="transmembrane region" description="Helical" evidence="3">
    <location>
        <begin position="424"/>
        <end position="444"/>
    </location>
</feature>
<feature type="transmembrane region" description="Helical" evidence="3">
    <location>
        <begin position="463"/>
        <end position="483"/>
    </location>
</feature>
<feature type="transmembrane region" description="Helical" evidence="3">
    <location>
        <begin position="507"/>
        <end position="527"/>
    </location>
</feature>
<feature type="modified residue" description="Phosphothreonine" evidence="2">
    <location>
        <position position="99"/>
    </location>
</feature>
<feature type="splice variant" id="VSP_039948" description="In isoform 3." evidence="6">
    <location>
        <begin position="1"/>
        <end position="118"/>
    </location>
</feature>
<feature type="splice variant" id="VSP_039949" description="In isoform 2." evidence="5">
    <location>
        <begin position="1"/>
        <end position="39"/>
    </location>
</feature>
<feature type="sequence conflict" description="In Ref. 3; BAC42330." evidence="7" ref="3">
    <original>L</original>
    <variation>S</variation>
    <location>
        <position position="368"/>
    </location>
</feature>
<proteinExistence type="evidence at transcript level"/>
<protein>
    <recommendedName>
        <fullName>Protein NRT1/ PTR FAMILY 5.11</fullName>
        <shortName>AtNPF5.11</shortName>
    </recommendedName>
</protein>
<sequence>MAITYSSADELGNTTEGFLEIRENTSGGWKSARLIIVVQMAERFAYFGIASNLIMYLTGPLGESTAAAAANVNAWTGTVAFLPLLGGFLADSYLGRFRTIIISSSLYILGLGLLSFSTMIPSHQSKDSNQLQETIFFFSLYLVAIGQGGYNPCIKVFGADQFDGNDHKEARDKSSFFNWLMFGNCISILTTRLVSTYIQENLSWSLGFGIPSVSMLLSLFLFLLGTTSYRFSTERVGKKNPFARISRVFMEALKNRRQPDLDIANANANETLLLLAHQSSKQFRFLDRAAISCELAEIEEAKAVLRLIPIWITSVVYTIVHAQSPTFFTKQGATMDRSISPGLLVPAATLQSFINLSVVVFIPIYDRLLVPFARSFTQNSSGITTLQRIGTGIFLSILAMVLAALVETKRLQAARDELSIPMSVWWLIPQYVIFGVSDMFTMVGLQEFFYGQVPSELRSVGMALNLSIYGAGNYLSSFMISVIDKITNQYGQRSWFDNDLDQAHLDYFYWLLACLGFIGFAFYLWFAKSYVYSRSNTF</sequence>
<evidence type="ECO:0000250" key="1"/>
<evidence type="ECO:0000250" key="2">
    <source>
        <dbReference type="UniProtKB" id="Q05085"/>
    </source>
</evidence>
<evidence type="ECO:0000255" key="3"/>
<evidence type="ECO:0000269" key="4">
    <source>
    </source>
</evidence>
<evidence type="ECO:0000303" key="5">
    <source>
    </source>
</evidence>
<evidence type="ECO:0000303" key="6">
    <source>
    </source>
</evidence>
<evidence type="ECO:0000305" key="7"/>
<name>PTR24_ARATH</name>
<gene>
    <name type="primary">NPF5.11</name>
    <name type="ordered locus">At1g72130</name>
    <name type="ORF">F28P5.1</name>
    <name type="ORF">T9N14.15</name>
</gene>
<accession>Q8RX67</accession>
<accession>Q3E7P6</accession>
<accession>Q8GYF0</accession>
<accession>Q9C7H6</accession>
<accession>Q9C7U2</accession>
<organism>
    <name type="scientific">Arabidopsis thaliana</name>
    <name type="common">Mouse-ear cress</name>
    <dbReference type="NCBI Taxonomy" id="3702"/>
    <lineage>
        <taxon>Eukaryota</taxon>
        <taxon>Viridiplantae</taxon>
        <taxon>Streptophyta</taxon>
        <taxon>Embryophyta</taxon>
        <taxon>Tracheophyta</taxon>
        <taxon>Spermatophyta</taxon>
        <taxon>Magnoliopsida</taxon>
        <taxon>eudicotyledons</taxon>
        <taxon>Gunneridae</taxon>
        <taxon>Pentapetalae</taxon>
        <taxon>rosids</taxon>
        <taxon>malvids</taxon>
        <taxon>Brassicales</taxon>
        <taxon>Brassicaceae</taxon>
        <taxon>Camelineae</taxon>
        <taxon>Arabidopsis</taxon>
    </lineage>
</organism>
<keyword id="KW-0025">Alternative splicing</keyword>
<keyword id="KW-0472">Membrane</keyword>
<keyword id="KW-0597">Phosphoprotein</keyword>
<keyword id="KW-1185">Reference proteome</keyword>
<keyword id="KW-0812">Transmembrane</keyword>
<keyword id="KW-1133">Transmembrane helix</keyword>
<keyword id="KW-0813">Transport</keyword>
<dbReference type="EMBL" id="AC067754">
    <property type="protein sequence ID" value="AAG51788.1"/>
    <property type="status" value="ALT_SEQ"/>
    <property type="molecule type" value="Genomic_DNA"/>
</dbReference>
<dbReference type="EMBL" id="AC069273">
    <property type="protein sequence ID" value="AAG51131.1"/>
    <property type="status" value="ALT_SEQ"/>
    <property type="molecule type" value="Genomic_DNA"/>
</dbReference>
<dbReference type="EMBL" id="CP002684">
    <property type="protein sequence ID" value="AEE35278.1"/>
    <property type="molecule type" value="Genomic_DNA"/>
</dbReference>
<dbReference type="EMBL" id="CP002684">
    <property type="protein sequence ID" value="AEE35279.1"/>
    <property type="molecule type" value="Genomic_DNA"/>
</dbReference>
<dbReference type="EMBL" id="CP002684">
    <property type="protein sequence ID" value="ANM58805.1"/>
    <property type="molecule type" value="Genomic_DNA"/>
</dbReference>
<dbReference type="EMBL" id="AK117678">
    <property type="protein sequence ID" value="BAC42330.1"/>
    <property type="molecule type" value="mRNA"/>
</dbReference>
<dbReference type="EMBL" id="AY090354">
    <property type="protein sequence ID" value="AAL91259.1"/>
    <property type="molecule type" value="mRNA"/>
</dbReference>
<dbReference type="EMBL" id="BT000836">
    <property type="protein sequence ID" value="AAN33211.1"/>
    <property type="molecule type" value="mRNA"/>
</dbReference>
<dbReference type="EMBL" id="BX814549">
    <property type="status" value="NOT_ANNOTATED_CDS"/>
    <property type="molecule type" value="mRNA"/>
</dbReference>
<dbReference type="PIR" id="F96744">
    <property type="entry name" value="F96744"/>
</dbReference>
<dbReference type="RefSeq" id="NP_001321216.1">
    <molecule id="Q8RX67-3"/>
    <property type="nucleotide sequence ID" value="NM_001334516.1"/>
</dbReference>
<dbReference type="RefSeq" id="NP_177358.2">
    <molecule id="Q8RX67-1"/>
    <property type="nucleotide sequence ID" value="NM_105871.4"/>
</dbReference>
<dbReference type="RefSeq" id="NP_974129.1">
    <molecule id="Q8RX67-3"/>
    <property type="nucleotide sequence ID" value="NM_202400.2"/>
</dbReference>
<dbReference type="SMR" id="Q8RX67"/>
<dbReference type="FunCoup" id="Q8RX67">
    <property type="interactions" value="175"/>
</dbReference>
<dbReference type="STRING" id="3702.Q8RX67"/>
<dbReference type="PaxDb" id="3702-AT1G72130.1"/>
<dbReference type="ProteomicsDB" id="226103">
    <molecule id="Q8RX67-1"/>
</dbReference>
<dbReference type="EnsemblPlants" id="AT1G72130.1">
    <molecule id="Q8RX67-1"/>
    <property type="protein sequence ID" value="AT1G72130.1"/>
    <property type="gene ID" value="AT1G72130"/>
</dbReference>
<dbReference type="EnsemblPlants" id="AT1G72130.2">
    <molecule id="Q8RX67-3"/>
    <property type="protein sequence ID" value="AT1G72130.2"/>
    <property type="gene ID" value="AT1G72130"/>
</dbReference>
<dbReference type="EnsemblPlants" id="AT1G72130.3">
    <molecule id="Q8RX67-3"/>
    <property type="protein sequence ID" value="AT1G72130.3"/>
    <property type="gene ID" value="AT1G72130"/>
</dbReference>
<dbReference type="GeneID" id="843544"/>
<dbReference type="Gramene" id="AT1G72130.1">
    <molecule id="Q8RX67-1"/>
    <property type="protein sequence ID" value="AT1G72130.1"/>
    <property type="gene ID" value="AT1G72130"/>
</dbReference>
<dbReference type="Gramene" id="AT1G72130.2">
    <molecule id="Q8RX67-3"/>
    <property type="protein sequence ID" value="AT1G72130.2"/>
    <property type="gene ID" value="AT1G72130"/>
</dbReference>
<dbReference type="Gramene" id="AT1G72130.3">
    <molecule id="Q8RX67-3"/>
    <property type="protein sequence ID" value="AT1G72130.3"/>
    <property type="gene ID" value="AT1G72130"/>
</dbReference>
<dbReference type="KEGG" id="ath:AT1G72130"/>
<dbReference type="Araport" id="AT1G72130"/>
<dbReference type="TAIR" id="AT1G72130">
    <property type="gene designation" value="NPF5.11"/>
</dbReference>
<dbReference type="eggNOG" id="KOG1237">
    <property type="taxonomic scope" value="Eukaryota"/>
</dbReference>
<dbReference type="HOGENOM" id="CLU_009313_4_1_1"/>
<dbReference type="InParanoid" id="Q8RX67"/>
<dbReference type="OMA" id="IYNLYFW"/>
<dbReference type="PhylomeDB" id="Q8RX67"/>
<dbReference type="PRO" id="PR:Q8RX67"/>
<dbReference type="Proteomes" id="UP000006548">
    <property type="component" value="Chromosome 1"/>
</dbReference>
<dbReference type="ExpressionAtlas" id="Q8RX67">
    <property type="expression patterns" value="baseline and differential"/>
</dbReference>
<dbReference type="GO" id="GO:0009705">
    <property type="term" value="C:plant-type vacuole membrane"/>
    <property type="evidence" value="ECO:0000314"/>
    <property type="project" value="TAIR"/>
</dbReference>
<dbReference type="GO" id="GO:0071916">
    <property type="term" value="F:dipeptide transmembrane transporter activity"/>
    <property type="evidence" value="ECO:0007669"/>
    <property type="project" value="InterPro"/>
</dbReference>
<dbReference type="GO" id="GO:0080054">
    <property type="term" value="F:low-affinity nitrate transmembrane transporter activity"/>
    <property type="evidence" value="ECO:0000314"/>
    <property type="project" value="TAIR"/>
</dbReference>
<dbReference type="GO" id="GO:0042937">
    <property type="term" value="F:tripeptide transmembrane transporter activity"/>
    <property type="evidence" value="ECO:0007669"/>
    <property type="project" value="InterPro"/>
</dbReference>
<dbReference type="GO" id="GO:0015706">
    <property type="term" value="P:nitrate transmembrane transport"/>
    <property type="evidence" value="ECO:0000314"/>
    <property type="project" value="TAIR"/>
</dbReference>
<dbReference type="CDD" id="cd17417">
    <property type="entry name" value="MFS_NPF5"/>
    <property type="match status" value="1"/>
</dbReference>
<dbReference type="FunFam" id="1.20.1250.20:FF:000410">
    <property type="entry name" value="POT family protein"/>
    <property type="match status" value="1"/>
</dbReference>
<dbReference type="Gene3D" id="1.20.1250.20">
    <property type="entry name" value="MFS general substrate transporter like domains"/>
    <property type="match status" value="1"/>
</dbReference>
<dbReference type="InterPro" id="IPR036259">
    <property type="entry name" value="MFS_trans_sf"/>
</dbReference>
<dbReference type="InterPro" id="IPR044739">
    <property type="entry name" value="NRT1/PTR"/>
</dbReference>
<dbReference type="InterPro" id="IPR000109">
    <property type="entry name" value="POT_fam"/>
</dbReference>
<dbReference type="InterPro" id="IPR018456">
    <property type="entry name" value="PTR2_symporter_CS"/>
</dbReference>
<dbReference type="PANTHER" id="PTHR11654">
    <property type="entry name" value="OLIGOPEPTIDE TRANSPORTER-RELATED"/>
    <property type="match status" value="1"/>
</dbReference>
<dbReference type="Pfam" id="PF00854">
    <property type="entry name" value="PTR2"/>
    <property type="match status" value="1"/>
</dbReference>
<dbReference type="SUPFAM" id="SSF103473">
    <property type="entry name" value="MFS general substrate transporter"/>
    <property type="match status" value="1"/>
</dbReference>
<dbReference type="PROSITE" id="PS01022">
    <property type="entry name" value="PTR2_1"/>
    <property type="match status" value="1"/>
</dbReference>